<keyword id="KW-0350">Heme biosynthesis</keyword>
<keyword id="KW-0456">Lyase</keyword>
<keyword id="KW-0460">Magnesium</keyword>
<keyword id="KW-0479">Metal-binding</keyword>
<keyword id="KW-0627">Porphyrin biosynthesis</keyword>
<keyword id="KW-1185">Reference proteome</keyword>
<keyword id="KW-0862">Zinc</keyword>
<gene>
    <name type="primary">hemB</name>
    <name type="ordered locus">MTH_744</name>
</gene>
<feature type="chain" id="PRO_0000140525" description="Delta-aminolevulinic acid dehydratase">
    <location>
        <begin position="1"/>
        <end position="326"/>
    </location>
</feature>
<feature type="active site" description="Schiff-base intermediate with substrate" evidence="1">
    <location>
        <position position="200"/>
    </location>
</feature>
<feature type="active site" description="Schiff-base intermediate with substrate" evidence="1">
    <location>
        <position position="253"/>
    </location>
</feature>
<feature type="binding site" evidence="1">
    <location>
        <position position="125"/>
    </location>
    <ligand>
        <name>Zn(2+)</name>
        <dbReference type="ChEBI" id="CHEBI:29105"/>
        <note>catalytic</note>
    </ligand>
</feature>
<feature type="binding site" evidence="1">
    <location>
        <position position="127"/>
    </location>
    <ligand>
        <name>Zn(2+)</name>
        <dbReference type="ChEBI" id="CHEBI:29105"/>
        <note>catalytic</note>
    </ligand>
</feature>
<feature type="binding site" evidence="1">
    <location>
        <position position="135"/>
    </location>
    <ligand>
        <name>Zn(2+)</name>
        <dbReference type="ChEBI" id="CHEBI:29105"/>
        <note>catalytic</note>
    </ligand>
</feature>
<feature type="binding site" evidence="1">
    <location>
        <position position="210"/>
    </location>
    <ligand>
        <name>5-aminolevulinate</name>
        <dbReference type="ChEBI" id="CHEBI:356416"/>
        <label>1</label>
    </ligand>
</feature>
<feature type="binding site" evidence="1">
    <location>
        <position position="222"/>
    </location>
    <ligand>
        <name>5-aminolevulinate</name>
        <dbReference type="ChEBI" id="CHEBI:356416"/>
        <label>1</label>
    </ligand>
</feature>
<feature type="binding site" evidence="1">
    <location>
        <position position="238"/>
    </location>
    <ligand>
        <name>Mg(2+)</name>
        <dbReference type="ChEBI" id="CHEBI:18420"/>
    </ligand>
</feature>
<feature type="binding site" evidence="1">
    <location>
        <position position="279"/>
    </location>
    <ligand>
        <name>5-aminolevulinate</name>
        <dbReference type="ChEBI" id="CHEBI:356416"/>
        <label>2</label>
    </ligand>
</feature>
<proteinExistence type="inferred from homology"/>
<sequence length="326" mass="35841">MSDNMEFPTKRMRRLRKSPQIRNILRETRLHPSDLIYPMFVSEKLGRGDVEAIDTMPGQFRYSVDDAVSEASRLEDEGLSSVLIFGMPSAKDELASAAHDPHGVVQRTVRRLKEETDLVVMTDVCLCQYTSHGHCGIVVDGEIVNDETLEVLSRIALSHAEAGADVVAPSDMMDGRVAAIRRSLDDAGFQDTLIMSYAVKYASAFYAPFRGAVSSAPAFGDRRSYQMDPANIDEALIEAELDLREGADILMVKPALAYLDVIGKVRERFSVPLAAYNVSGEYSMLKAAIKSGYLTDEAIYESILSIKRAGADLIISHFAPDLLGVI</sequence>
<name>HEM2_METTH</name>
<dbReference type="EC" id="4.2.1.24"/>
<dbReference type="EMBL" id="AE000666">
    <property type="protein sequence ID" value="AAB85248.1"/>
    <property type="molecule type" value="Genomic_DNA"/>
</dbReference>
<dbReference type="PIR" id="E69199">
    <property type="entry name" value="E69199"/>
</dbReference>
<dbReference type="SMR" id="O26839"/>
<dbReference type="FunCoup" id="O26839">
    <property type="interactions" value="220"/>
</dbReference>
<dbReference type="STRING" id="187420.MTH_744"/>
<dbReference type="PaxDb" id="187420-MTH_744"/>
<dbReference type="EnsemblBacteria" id="AAB85248">
    <property type="protein sequence ID" value="AAB85248"/>
    <property type="gene ID" value="MTH_744"/>
</dbReference>
<dbReference type="KEGG" id="mth:MTH_744"/>
<dbReference type="PATRIC" id="fig|187420.15.peg.732"/>
<dbReference type="HOGENOM" id="CLU_035731_0_0_2"/>
<dbReference type="InParanoid" id="O26839"/>
<dbReference type="UniPathway" id="UPA00251">
    <property type="reaction ID" value="UER00318"/>
</dbReference>
<dbReference type="Proteomes" id="UP000005223">
    <property type="component" value="Chromosome"/>
</dbReference>
<dbReference type="GO" id="GO:0005829">
    <property type="term" value="C:cytosol"/>
    <property type="evidence" value="ECO:0007669"/>
    <property type="project" value="TreeGrafter"/>
</dbReference>
<dbReference type="GO" id="GO:0004655">
    <property type="term" value="F:porphobilinogen synthase activity"/>
    <property type="evidence" value="ECO:0007669"/>
    <property type="project" value="UniProtKB-EC"/>
</dbReference>
<dbReference type="GO" id="GO:0008270">
    <property type="term" value="F:zinc ion binding"/>
    <property type="evidence" value="ECO:0007669"/>
    <property type="project" value="TreeGrafter"/>
</dbReference>
<dbReference type="GO" id="GO:0006782">
    <property type="term" value="P:protoporphyrinogen IX biosynthetic process"/>
    <property type="evidence" value="ECO:0007669"/>
    <property type="project" value="UniProtKB-UniPathway"/>
</dbReference>
<dbReference type="CDD" id="cd00384">
    <property type="entry name" value="ALAD_PBGS"/>
    <property type="match status" value="1"/>
</dbReference>
<dbReference type="FunFam" id="3.20.20.70:FF:000019">
    <property type="entry name" value="Delta-aminolevulinic acid dehydratase"/>
    <property type="match status" value="1"/>
</dbReference>
<dbReference type="Gene3D" id="3.20.20.70">
    <property type="entry name" value="Aldolase class I"/>
    <property type="match status" value="1"/>
</dbReference>
<dbReference type="InterPro" id="IPR001731">
    <property type="entry name" value="ALAD"/>
</dbReference>
<dbReference type="InterPro" id="IPR030656">
    <property type="entry name" value="ALAD_AS"/>
</dbReference>
<dbReference type="InterPro" id="IPR013785">
    <property type="entry name" value="Aldolase_TIM"/>
</dbReference>
<dbReference type="NCBIfam" id="NF006762">
    <property type="entry name" value="PRK09283.1"/>
    <property type="match status" value="1"/>
</dbReference>
<dbReference type="PANTHER" id="PTHR11458">
    <property type="entry name" value="DELTA-AMINOLEVULINIC ACID DEHYDRATASE"/>
    <property type="match status" value="1"/>
</dbReference>
<dbReference type="PANTHER" id="PTHR11458:SF0">
    <property type="entry name" value="DELTA-AMINOLEVULINIC ACID DEHYDRATASE"/>
    <property type="match status" value="1"/>
</dbReference>
<dbReference type="Pfam" id="PF00490">
    <property type="entry name" value="ALAD"/>
    <property type="match status" value="1"/>
</dbReference>
<dbReference type="PIRSF" id="PIRSF001415">
    <property type="entry name" value="Porphbilin_synth"/>
    <property type="match status" value="1"/>
</dbReference>
<dbReference type="PRINTS" id="PR00144">
    <property type="entry name" value="DALDHYDRTASE"/>
</dbReference>
<dbReference type="SMART" id="SM01004">
    <property type="entry name" value="ALAD"/>
    <property type="match status" value="1"/>
</dbReference>
<dbReference type="SUPFAM" id="SSF51569">
    <property type="entry name" value="Aldolase"/>
    <property type="match status" value="1"/>
</dbReference>
<dbReference type="PROSITE" id="PS00169">
    <property type="entry name" value="D_ALA_DEHYDRATASE"/>
    <property type="match status" value="1"/>
</dbReference>
<organism>
    <name type="scientific">Methanothermobacter thermautotrophicus (strain ATCC 29096 / DSM 1053 / JCM 10044 / NBRC 100330 / Delta H)</name>
    <name type="common">Methanobacterium thermoautotrophicum</name>
    <dbReference type="NCBI Taxonomy" id="187420"/>
    <lineage>
        <taxon>Archaea</taxon>
        <taxon>Methanobacteriati</taxon>
        <taxon>Methanobacteriota</taxon>
        <taxon>Methanomada group</taxon>
        <taxon>Methanobacteria</taxon>
        <taxon>Methanobacteriales</taxon>
        <taxon>Methanobacteriaceae</taxon>
        <taxon>Methanothermobacter</taxon>
    </lineage>
</organism>
<accession>O26839</accession>
<reference key="1">
    <citation type="journal article" date="1997" name="J. Bacteriol.">
        <title>Complete genome sequence of Methanobacterium thermoautotrophicum deltaH: functional analysis and comparative genomics.</title>
        <authorList>
            <person name="Smith D.R."/>
            <person name="Doucette-Stamm L.A."/>
            <person name="Deloughery C."/>
            <person name="Lee H.-M."/>
            <person name="Dubois J."/>
            <person name="Aldredge T."/>
            <person name="Bashirzadeh R."/>
            <person name="Blakely D."/>
            <person name="Cook R."/>
            <person name="Gilbert K."/>
            <person name="Harrison D."/>
            <person name="Hoang L."/>
            <person name="Keagle P."/>
            <person name="Lumm W."/>
            <person name="Pothier B."/>
            <person name="Qiu D."/>
            <person name="Spadafora R."/>
            <person name="Vicare R."/>
            <person name="Wang Y."/>
            <person name="Wierzbowski J."/>
            <person name="Gibson R."/>
            <person name="Jiwani N."/>
            <person name="Caruso A."/>
            <person name="Bush D."/>
            <person name="Safer H."/>
            <person name="Patwell D."/>
            <person name="Prabhakar S."/>
            <person name="McDougall S."/>
            <person name="Shimer G."/>
            <person name="Goyal A."/>
            <person name="Pietrovski S."/>
            <person name="Church G.M."/>
            <person name="Daniels C.J."/>
            <person name="Mao J.-I."/>
            <person name="Rice P."/>
            <person name="Noelling J."/>
            <person name="Reeve J.N."/>
        </authorList>
    </citation>
    <scope>NUCLEOTIDE SEQUENCE [LARGE SCALE GENOMIC DNA]</scope>
    <source>
        <strain>ATCC 29096 / DSM 1053 / JCM 10044 / NBRC 100330 / Delta H</strain>
    </source>
</reference>
<protein>
    <recommendedName>
        <fullName>Delta-aminolevulinic acid dehydratase</fullName>
        <shortName>ALAD</shortName>
        <shortName>ALADH</shortName>
        <ecNumber>4.2.1.24</ecNumber>
    </recommendedName>
    <alternativeName>
        <fullName>Porphobilinogen synthase</fullName>
    </alternativeName>
</protein>
<comment type="function">
    <text evidence="1">Catalyzes an early step in the biosynthesis of tetrapyrroles. Binds two molecules of 5-aminolevulinate per subunit, each at a distinct site, and catalyzes their condensation to form porphobilinogen (By similarity).</text>
</comment>
<comment type="catalytic activity">
    <reaction>
        <text>2 5-aminolevulinate = porphobilinogen + 2 H2O + H(+)</text>
        <dbReference type="Rhea" id="RHEA:24064"/>
        <dbReference type="ChEBI" id="CHEBI:15377"/>
        <dbReference type="ChEBI" id="CHEBI:15378"/>
        <dbReference type="ChEBI" id="CHEBI:58126"/>
        <dbReference type="ChEBI" id="CHEBI:356416"/>
        <dbReference type="EC" id="4.2.1.24"/>
    </reaction>
</comment>
<comment type="cofactor">
    <cofactor evidence="1">
        <name>Zn(2+)</name>
        <dbReference type="ChEBI" id="CHEBI:29105"/>
    </cofactor>
    <text evidence="1">Binds 1 zinc ion per monomer.</text>
</comment>
<comment type="pathway">
    <text>Porphyrin-containing compound metabolism; protoporphyrin-IX biosynthesis; coproporphyrinogen-III from 5-aminolevulinate: step 1/4.</text>
</comment>
<comment type="subunit">
    <text evidence="1">Homooctamer.</text>
</comment>
<comment type="similarity">
    <text evidence="2">Belongs to the ALAD family.</text>
</comment>
<evidence type="ECO:0000250" key="1"/>
<evidence type="ECO:0000305" key="2"/>